<dbReference type="EMBL" id="U00096">
    <property type="protein sequence ID" value="AAC74825.2"/>
    <property type="molecule type" value="Genomic_DNA"/>
</dbReference>
<dbReference type="EMBL" id="AP009048">
    <property type="protein sequence ID" value="BAA15546.2"/>
    <property type="status" value="ALT_INIT"/>
    <property type="molecule type" value="Genomic_DNA"/>
</dbReference>
<dbReference type="PIR" id="C64935">
    <property type="entry name" value="C64935"/>
</dbReference>
<dbReference type="RefSeq" id="NP_416269.4">
    <property type="nucleotide sequence ID" value="NC_000913.3"/>
</dbReference>
<dbReference type="RefSeq" id="WP_000224958.1">
    <property type="nucleotide sequence ID" value="NZ_SSZK01000001.1"/>
</dbReference>
<dbReference type="BioGRID" id="4262127">
    <property type="interactions" value="215"/>
</dbReference>
<dbReference type="ComplexPortal" id="CPX-4465">
    <property type="entry name" value="YnjBCD ABC transporter complex"/>
</dbReference>
<dbReference type="FunCoup" id="P76224">
    <property type="interactions" value="40"/>
</dbReference>
<dbReference type="STRING" id="511145.b1755"/>
<dbReference type="PaxDb" id="511145-b1755"/>
<dbReference type="EnsemblBacteria" id="AAC74825">
    <property type="protein sequence ID" value="AAC74825"/>
    <property type="gene ID" value="b1755"/>
</dbReference>
<dbReference type="GeneID" id="946273"/>
<dbReference type="KEGG" id="ecj:JW5285"/>
<dbReference type="KEGG" id="eco:b1755"/>
<dbReference type="KEGG" id="ecoc:C3026_10020"/>
<dbReference type="PATRIC" id="fig|1411691.4.peg.500"/>
<dbReference type="EchoBASE" id="EB3761"/>
<dbReference type="eggNOG" id="COG4135">
    <property type="taxonomic scope" value="Bacteria"/>
</dbReference>
<dbReference type="HOGENOM" id="CLU_026097_1_0_6"/>
<dbReference type="InParanoid" id="P76224"/>
<dbReference type="OMA" id="WQWLSQG"/>
<dbReference type="OrthoDB" id="7852521at2"/>
<dbReference type="BioCyc" id="EcoCyc:YNJC-MONOMER"/>
<dbReference type="PRO" id="PR:P76224"/>
<dbReference type="Proteomes" id="UP000000625">
    <property type="component" value="Chromosome"/>
</dbReference>
<dbReference type="GO" id="GO:0043190">
    <property type="term" value="C:ATP-binding cassette (ABC) transporter complex"/>
    <property type="evidence" value="ECO:0000305"/>
    <property type="project" value="EcoCyc"/>
</dbReference>
<dbReference type="GO" id="GO:0055052">
    <property type="term" value="C:ATP-binding cassette (ABC) transporter complex, substrate-binding subunit-containing"/>
    <property type="evidence" value="ECO:0000303"/>
    <property type="project" value="ComplexPortal"/>
</dbReference>
<dbReference type="GO" id="GO:0016020">
    <property type="term" value="C:membrane"/>
    <property type="evidence" value="ECO:0000303"/>
    <property type="project" value="ComplexPortal"/>
</dbReference>
<dbReference type="GO" id="GO:0005886">
    <property type="term" value="C:plasma membrane"/>
    <property type="evidence" value="ECO:0000255"/>
    <property type="project" value="EcoCyc"/>
</dbReference>
<dbReference type="GO" id="GO:0055085">
    <property type="term" value="P:transmembrane transport"/>
    <property type="evidence" value="ECO:0000303"/>
    <property type="project" value="ComplexPortal"/>
</dbReference>
<dbReference type="CDD" id="cd06261">
    <property type="entry name" value="TM_PBP2"/>
    <property type="match status" value="1"/>
</dbReference>
<dbReference type="FunFam" id="1.10.3720.10:FF:000099">
    <property type="entry name" value="Inner membrane ABC transporter permease ynjC"/>
    <property type="match status" value="1"/>
</dbReference>
<dbReference type="FunFam" id="1.10.3720.10:FF:000106">
    <property type="entry name" value="Inner membrane ABC transporter permease ynjC"/>
    <property type="match status" value="1"/>
</dbReference>
<dbReference type="Gene3D" id="1.10.3720.10">
    <property type="entry name" value="MetI-like"/>
    <property type="match status" value="2"/>
</dbReference>
<dbReference type="InterPro" id="IPR000515">
    <property type="entry name" value="MetI-like"/>
</dbReference>
<dbReference type="InterPro" id="IPR035906">
    <property type="entry name" value="MetI-like_sf"/>
</dbReference>
<dbReference type="PANTHER" id="PTHR30183">
    <property type="entry name" value="MOLYBDENUM TRANSPORT SYSTEM PERMEASE PROTEIN MODB"/>
    <property type="match status" value="1"/>
</dbReference>
<dbReference type="PANTHER" id="PTHR30183:SF3">
    <property type="entry name" value="MOLYBDENUM TRANSPORT SYSTEM PERMEASE PROTEIN MODB"/>
    <property type="match status" value="1"/>
</dbReference>
<dbReference type="Pfam" id="PF00528">
    <property type="entry name" value="BPD_transp_1"/>
    <property type="match status" value="1"/>
</dbReference>
<dbReference type="SUPFAM" id="SSF161098">
    <property type="entry name" value="MetI-like"/>
    <property type="match status" value="2"/>
</dbReference>
<dbReference type="PROSITE" id="PS50928">
    <property type="entry name" value="ABC_TM1"/>
    <property type="match status" value="2"/>
</dbReference>
<gene>
    <name type="primary">ynjC</name>
    <name type="ordered locus">b1755</name>
    <name type="ordered locus">JW5285</name>
</gene>
<protein>
    <recommendedName>
        <fullName>Inner membrane ABC transporter permease protein YnjC</fullName>
    </recommendedName>
</protein>
<accession>P76224</accession>
<accession>P76908</accession>
<organism>
    <name type="scientific">Escherichia coli (strain K12)</name>
    <dbReference type="NCBI Taxonomy" id="83333"/>
    <lineage>
        <taxon>Bacteria</taxon>
        <taxon>Pseudomonadati</taxon>
        <taxon>Pseudomonadota</taxon>
        <taxon>Gammaproteobacteria</taxon>
        <taxon>Enterobacterales</taxon>
        <taxon>Enterobacteriaceae</taxon>
        <taxon>Escherichia</taxon>
    </lineage>
</organism>
<keyword id="KW-0997">Cell inner membrane</keyword>
<keyword id="KW-1003">Cell membrane</keyword>
<keyword id="KW-0472">Membrane</keyword>
<keyword id="KW-1185">Reference proteome</keyword>
<keyword id="KW-0677">Repeat</keyword>
<keyword id="KW-0812">Transmembrane</keyword>
<keyword id="KW-1133">Transmembrane helix</keyword>
<keyword id="KW-0813">Transport</keyword>
<sequence>MATPLRYALIFLLWAMVAVIYAPLIPAALTLISPALSLTHWQALFADPQLPQALLATLVSTTIAAVGALLIALLVIVALWPGPKWQRMCARLPWLLAIPHVAFATSALLLFADGGLLYDYFPYFTPPMDRFGIGLGLTLAVKESAFLLWILAAVLSEKWLLQQVIVLDSLGYSRWQCLNWLLLPSVAPALAMAMLAIVAWSLSVVDVAIILGPGNPPTLAVISWQWLTQGDIDQQTKGALASLLLMLLLAAYVLLSYLLWRSWRRTIPRVDGVRKPATPLLPGNTLAIFLPLTGVLCVVLLAILADQSTINSEALINSLTMGLVATFIALLLLLLWLEWGPQRRQLWLWLPILLPALPLVAGQYTLALWLKLDGSWTAVVWGHLLWVMPWMLFILQPAWQRIDSRLILIAQTLGWSRAKIFFYVKCPLMLRPVLIAFAVGFAVGIAQYMPTLWLGAGRFPTLTTEAVALSSGGSNGILAAQALWQLLLPLIIFALTALVAKWVGYVRQGLR</sequence>
<name>YNJC_ECOLI</name>
<proteinExistence type="evidence at protein level"/>
<reference key="1">
    <citation type="journal article" date="1996" name="DNA Res.">
        <title>A 570-kb DNA sequence of the Escherichia coli K-12 genome corresponding to the 28.0-40.1 min region on the linkage map.</title>
        <authorList>
            <person name="Aiba H."/>
            <person name="Baba T."/>
            <person name="Fujita K."/>
            <person name="Hayashi K."/>
            <person name="Inada T."/>
            <person name="Isono K."/>
            <person name="Itoh T."/>
            <person name="Kasai H."/>
            <person name="Kashimoto K."/>
            <person name="Kimura S."/>
            <person name="Kitakawa M."/>
            <person name="Kitagawa M."/>
            <person name="Makino K."/>
            <person name="Miki T."/>
            <person name="Mizobuchi K."/>
            <person name="Mori H."/>
            <person name="Mori T."/>
            <person name="Motomura K."/>
            <person name="Nakade S."/>
            <person name="Nakamura Y."/>
            <person name="Nashimoto H."/>
            <person name="Nishio Y."/>
            <person name="Oshima T."/>
            <person name="Saito N."/>
            <person name="Sampei G."/>
            <person name="Seki Y."/>
            <person name="Sivasundaram S."/>
            <person name="Tagami H."/>
            <person name="Takeda J."/>
            <person name="Takemoto K."/>
            <person name="Takeuchi Y."/>
            <person name="Wada C."/>
            <person name="Yamamoto Y."/>
            <person name="Horiuchi T."/>
        </authorList>
    </citation>
    <scope>NUCLEOTIDE SEQUENCE [LARGE SCALE GENOMIC DNA]</scope>
    <source>
        <strain>K12 / W3110 / ATCC 27325 / DSM 5911</strain>
    </source>
</reference>
<reference key="2">
    <citation type="journal article" date="1997" name="Science">
        <title>The complete genome sequence of Escherichia coli K-12.</title>
        <authorList>
            <person name="Blattner F.R."/>
            <person name="Plunkett G. III"/>
            <person name="Bloch C.A."/>
            <person name="Perna N.T."/>
            <person name="Burland V."/>
            <person name="Riley M."/>
            <person name="Collado-Vides J."/>
            <person name="Glasner J.D."/>
            <person name="Rode C.K."/>
            <person name="Mayhew G.F."/>
            <person name="Gregor J."/>
            <person name="Davis N.W."/>
            <person name="Kirkpatrick H.A."/>
            <person name="Goeden M.A."/>
            <person name="Rose D.J."/>
            <person name="Mau B."/>
            <person name="Shao Y."/>
        </authorList>
    </citation>
    <scope>NUCLEOTIDE SEQUENCE [LARGE SCALE GENOMIC DNA]</scope>
    <source>
        <strain>K12 / MG1655 / ATCC 47076</strain>
    </source>
</reference>
<reference key="3">
    <citation type="journal article" date="2006" name="Mol. Syst. Biol.">
        <title>Highly accurate genome sequences of Escherichia coli K-12 strains MG1655 and W3110.</title>
        <authorList>
            <person name="Hayashi K."/>
            <person name="Morooka N."/>
            <person name="Yamamoto Y."/>
            <person name="Fujita K."/>
            <person name="Isono K."/>
            <person name="Choi S."/>
            <person name="Ohtsubo E."/>
            <person name="Baba T."/>
            <person name="Wanner B.L."/>
            <person name="Mori H."/>
            <person name="Horiuchi T."/>
        </authorList>
    </citation>
    <scope>NUCLEOTIDE SEQUENCE [LARGE SCALE GENOMIC DNA]</scope>
    <scope>SEQUENCE REVISION</scope>
    <source>
        <strain>K12 / W3110 / ATCC 27325 / DSM 5911</strain>
    </source>
</reference>
<reference key="4">
    <citation type="journal article" date="2005" name="Science">
        <title>Global topology analysis of the Escherichia coli inner membrane proteome.</title>
        <authorList>
            <person name="Daley D.O."/>
            <person name="Rapp M."/>
            <person name="Granseth E."/>
            <person name="Melen K."/>
            <person name="Drew D."/>
            <person name="von Heijne G."/>
        </authorList>
    </citation>
    <scope>TOPOLOGY [LARGE SCALE ANALYSIS]</scope>
    <source>
        <strain>K12 / MG1655 / ATCC 47076</strain>
    </source>
</reference>
<feature type="chain" id="PRO_0000060263" description="Inner membrane ABC transporter permease protein YnjC">
    <location>
        <begin position="1"/>
        <end position="511"/>
    </location>
</feature>
<feature type="topological domain" description="Cytoplasmic" evidence="1">
    <location>
        <begin position="1"/>
        <end position="8"/>
    </location>
</feature>
<feature type="transmembrane region" description="Helical" evidence="2">
    <location>
        <begin position="9"/>
        <end position="29"/>
    </location>
</feature>
<feature type="topological domain" description="Periplasmic" evidence="1">
    <location>
        <begin position="30"/>
        <end position="62"/>
    </location>
</feature>
<feature type="transmembrane region" description="Helical" evidence="2">
    <location>
        <begin position="63"/>
        <end position="83"/>
    </location>
</feature>
<feature type="topological domain" description="Cytoplasmic" evidence="1">
    <location>
        <begin position="84"/>
        <end position="91"/>
    </location>
</feature>
<feature type="transmembrane region" description="Helical" evidence="2">
    <location>
        <begin position="92"/>
        <end position="112"/>
    </location>
</feature>
<feature type="topological domain" description="Periplasmic" evidence="1">
    <location>
        <begin position="113"/>
        <end position="130"/>
    </location>
</feature>
<feature type="transmembrane region" description="Helical" evidence="2">
    <location>
        <begin position="131"/>
        <end position="151"/>
    </location>
</feature>
<feature type="topological domain" description="Cytoplasmic" evidence="1">
    <location>
        <begin position="152"/>
        <end position="189"/>
    </location>
</feature>
<feature type="transmembrane region" description="Helical" evidence="2">
    <location>
        <begin position="190"/>
        <end position="210"/>
    </location>
</feature>
<feature type="topological domain" description="Periplasmic" evidence="1">
    <location>
        <begin position="211"/>
        <end position="239"/>
    </location>
</feature>
<feature type="transmembrane region" description="Helical" evidence="2">
    <location>
        <begin position="240"/>
        <end position="260"/>
    </location>
</feature>
<feature type="topological domain" description="Cytoplasmic" evidence="1">
    <location>
        <begin position="261"/>
        <end position="284"/>
    </location>
</feature>
<feature type="transmembrane region" description="Helical" evidence="2">
    <location>
        <begin position="285"/>
        <end position="305"/>
    </location>
</feature>
<feature type="topological domain" description="Periplasmic" evidence="1">
    <location>
        <begin position="306"/>
        <end position="318"/>
    </location>
</feature>
<feature type="transmembrane region" description="Helical" evidence="2">
    <location>
        <begin position="319"/>
        <end position="339"/>
    </location>
</feature>
<feature type="topological domain" description="Cytoplasmic" evidence="1">
    <location>
        <begin position="340"/>
        <end position="345"/>
    </location>
</feature>
<feature type="transmembrane region" description="Helical" evidence="2">
    <location>
        <begin position="346"/>
        <end position="366"/>
    </location>
</feature>
<feature type="topological domain" description="Periplasmic" evidence="1">
    <location>
        <begin position="367"/>
        <end position="374"/>
    </location>
</feature>
<feature type="transmembrane region" description="Helical" evidence="2">
    <location>
        <begin position="375"/>
        <end position="395"/>
    </location>
</feature>
<feature type="topological domain" description="Cytoplasmic" evidence="1">
    <location>
        <begin position="396"/>
        <end position="432"/>
    </location>
</feature>
<feature type="transmembrane region" description="Helical" evidence="2">
    <location>
        <begin position="433"/>
        <end position="453"/>
    </location>
</feature>
<feature type="topological domain" description="Periplasmic" evidence="1">
    <location>
        <begin position="454"/>
        <end position="485"/>
    </location>
</feature>
<feature type="transmembrane region" description="Helical" evidence="2">
    <location>
        <begin position="486"/>
        <end position="506"/>
    </location>
</feature>
<feature type="topological domain" description="Cytoplasmic" evidence="1">
    <location>
        <begin position="507"/>
        <end position="511"/>
    </location>
</feature>
<feature type="domain" description="ABC transmembrane type-1 1" evidence="2">
    <location>
        <begin position="54"/>
        <end position="255"/>
    </location>
</feature>
<feature type="domain" description="ABC transmembrane type-1 2" evidence="2">
    <location>
        <begin position="315"/>
        <end position="496"/>
    </location>
</feature>
<evidence type="ECO:0000255" key="1"/>
<evidence type="ECO:0000255" key="2">
    <source>
        <dbReference type="PROSITE-ProRule" id="PRU00441"/>
    </source>
</evidence>
<evidence type="ECO:0000305" key="3"/>
<comment type="function">
    <text>Probably part of the binding-protein-dependent transport system YnjCD. Probably responsible for the translocation of the substrate across the membrane.</text>
</comment>
<comment type="subcellular location">
    <subcellularLocation>
        <location>Cell inner membrane</location>
        <topology>Multi-pass membrane protein</topology>
    </subcellularLocation>
</comment>
<comment type="similarity">
    <text evidence="3">Belongs to the binding-protein-dependent transport system permease family.</text>
</comment>
<comment type="sequence caution" evidence="3">
    <conflict type="erroneous initiation">
        <sequence resource="EMBL-CDS" id="BAA15546"/>
    </conflict>
</comment>